<dbReference type="EC" id="1.1.1.-" evidence="6"/>
<dbReference type="EMBL" id="LC079035">
    <property type="protein sequence ID" value="BAV32155.1"/>
    <property type="molecule type" value="Genomic_DNA"/>
</dbReference>
<dbReference type="SMR" id="A0A1B4XBH5"/>
<dbReference type="GO" id="GO:0016491">
    <property type="term" value="F:oxidoreductase activity"/>
    <property type="evidence" value="ECO:0007669"/>
    <property type="project" value="UniProtKB-KW"/>
</dbReference>
<dbReference type="GO" id="GO:0017000">
    <property type="term" value="P:antibiotic biosynthetic process"/>
    <property type="evidence" value="ECO:0007669"/>
    <property type="project" value="UniProtKB-KW"/>
</dbReference>
<dbReference type="Gene3D" id="3.40.50.720">
    <property type="entry name" value="NAD(P)-binding Rossmann-like Domain"/>
    <property type="match status" value="1"/>
</dbReference>
<dbReference type="InterPro" id="IPR036291">
    <property type="entry name" value="NAD(P)-bd_dom_sf"/>
</dbReference>
<dbReference type="InterPro" id="IPR002347">
    <property type="entry name" value="SDR_fam"/>
</dbReference>
<dbReference type="PANTHER" id="PTHR43157:SF31">
    <property type="entry name" value="PHOSPHATIDYLINOSITOL-GLYCAN BIOSYNTHESIS CLASS F PROTEIN"/>
    <property type="match status" value="1"/>
</dbReference>
<dbReference type="PANTHER" id="PTHR43157">
    <property type="entry name" value="PHOSPHATIDYLINOSITOL-GLYCAN BIOSYNTHESIS CLASS F PROTEIN-RELATED"/>
    <property type="match status" value="1"/>
</dbReference>
<dbReference type="Pfam" id="PF00106">
    <property type="entry name" value="adh_short"/>
    <property type="match status" value="1"/>
</dbReference>
<dbReference type="PRINTS" id="PR00081">
    <property type="entry name" value="GDHRDH"/>
</dbReference>
<dbReference type="SUPFAM" id="SSF51735">
    <property type="entry name" value="NAD(P)-binding Rossmann-fold domains"/>
    <property type="match status" value="1"/>
</dbReference>
<sequence length="351" mass="38070">MVQFNGPHGKVTVSYLRQGGLNPPAPAPKGSFTGKTVLITGCSSGIGYQAALQIASLNPKRLILGTRTLAKGEAAKQEILATVGPSLDSSIIEVIPIECSDLSSVRQFTTTVRKTTPPGTLDCVLLSAGLALPTREVVTDESGHEWPTTFVVNVLAPALLALEFLPLLQSTPGSVVESVNSISYCNVTSEDISPLLSSQDEATGTTSALDFFNNPERWTTQRAYYEAKLMLMFVLEGLVQDQAQQQASQPGEDRKVLFLACCPGQCRTNLYRQFGLGVRAFMTLFNAVIARTAEQGARTLVTGLLLQGEEAMGKMWVNDRFDDWSPGITEEEWKVLQKRVWEEIKGVLGKA</sequence>
<protein>
    <recommendedName>
        <fullName evidence="4">Short-chain dehydrogenase sdnK</fullName>
        <ecNumber evidence="6">1.1.1.-</ecNumber>
    </recommendedName>
    <alternativeName>
        <fullName evidence="4">Sordarin/hypoxysordarin biosynthesis cluster protein K</fullName>
    </alternativeName>
</protein>
<comment type="function">
    <text evidence="3">Short-chain dehydrogenase; part of the gene cluster that mediates the biosynthesis of sordarin and hypoxysordarin, glycoside antibiotics with a unique tetracyclic diterpene aglycone structure (PubMed:27072286). First, the geranylgeranyl diphosphate synthase sdnC constructs GGDP from farnesyl diphosphate and isopentenyl diphosphate (PubMed:27072286). The diterpene cyclase sdnA then catalyzes the cyclization of GGDP to afford cycloaraneosene (PubMed:27072286). Cycloaraneosene is then hydroxylated four times by the putative cytochrome P450 monooxygenases sdnB, sdnE, sdnF and sdnH to give a hydroxylated cycloaraneosene derivative such as cycloaraneosene-8,9,13,19-tetraol (PubMed:27072286). Although the order of the hydroxylations is unclear, at least C8, C9 and C13 of the cycloaraneosene skeleton are hydroxylated before the sordaricin formation (PubMed:27072286). Dehydration of the 13-hydroxy group of the hydroxylated cycloaraneosene derivative might be catalyzed by an unassigned hypothetical protein such as sdnG and sdnP to construct the cyclopentadiene moiety (PubMed:27072286). The FAD-dependent oxidoreductase sdnN is proposed to catalyze the oxidation at C9 of the hydroxylated cycloaraneosene derivative and also catalyze the Baeyer-Villiger oxidation to give the lactone intermediate (PubMed:27072286). The presumed lactone intermediate would be hydrolyzed to give an acrolein moiety and a carboxylate moiety (PubMed:27072286). Then, [4+2]cycloaddition would occur between the acrolein moiety and the cyclopentadiene moiety to give sordaricin (PubMed:27072286). SdnN might also be involved in the [4+2]cycloaddition after the hypothesized oxidation to accommodate the oxidized product and prompt the [4+2]cycloaddition (PubMed:27072286). GDP-6-deoxy-D-altrose may be biosynthesized from GDP-D-mannose by the putative GDP-mannose-4,6-dehydratase sdnI and the short-chain dehydrogenase sdnK (PubMed:27072286). The glycosyltransferase sdnJ catalyzes the attachment of 6-deoxy-D-altrose onto the 19-hydroxy group of sordaricin to give 4'-O-demethylsordarin (PubMed:27072286). The methyltransferase sdnD would complete the biosynthesis of sordarin (PubMed:27072286). Sordarin can be further modified into hypoxysordarin (PubMed:27072286). The unique acyl chain at the 3'-hydroxy group of hypoxysordarin would be constructed by an iterative type I PKS sdnO and the trans-acting polyketide methyltransferase sdnL. SdnL would be responsible for the introduction of an alpha-methyl group of the polyketide chain (PubMed:27072286). Alternatively, the beta-lactamase-like protein sdnR might be responsible for the cleavage and transfer of the polyketide chain from the PKS sdnO to sordarin (PubMed:27072286). Two putative cytochrome P450 monooxygenases, sdnQ and sdnT, might catalyze the epoxidations of the polyketide chain to complete the biosynthesis of hypoxysordarin (PubMed:27072286). Transcriptional regulators sdnM and sdnS are presumably encoded for the transcriptional regulation of the expression of the sdn gene cluster (PubMed:27072286).</text>
</comment>
<comment type="pathway">
    <text evidence="6">Antibiotic biosynthesis.</text>
</comment>
<comment type="similarity">
    <text evidence="5">Belongs to the short-chain dehydrogenases/reductases (SDR) family.</text>
</comment>
<accession>A0A1B4XBH5</accession>
<feature type="chain" id="PRO_0000441062" description="Short-chain dehydrogenase sdnK">
    <location>
        <begin position="1"/>
        <end position="351"/>
    </location>
</feature>
<feature type="active site" description="Proton donor" evidence="2">
    <location>
        <position position="224"/>
    </location>
</feature>
<feature type="active site" description="Lowers pKa of active site Tyr" evidence="2">
    <location>
        <position position="228"/>
    </location>
</feature>
<feature type="binding site" evidence="1">
    <location>
        <position position="46"/>
    </location>
    <ligand>
        <name>NADP(+)</name>
        <dbReference type="ChEBI" id="CHEBI:58349"/>
    </ligand>
</feature>
<feature type="binding site" evidence="1">
    <location>
        <position position="66"/>
    </location>
    <ligand>
        <name>NADP(+)</name>
        <dbReference type="ChEBI" id="CHEBI:58349"/>
    </ligand>
</feature>
<feature type="binding site" evidence="1">
    <location>
        <position position="98"/>
    </location>
    <ligand>
        <name>NADP(+)</name>
        <dbReference type="ChEBI" id="CHEBI:58349"/>
    </ligand>
</feature>
<feature type="binding site" evidence="2">
    <location>
        <position position="224"/>
    </location>
    <ligand>
        <name>NADP(+)</name>
        <dbReference type="ChEBI" id="CHEBI:58349"/>
    </ligand>
</feature>
<feature type="binding site" evidence="2">
    <location>
        <position position="228"/>
    </location>
    <ligand>
        <name>NADP(+)</name>
        <dbReference type="ChEBI" id="CHEBI:58349"/>
    </ligand>
</feature>
<feature type="binding site" evidence="1">
    <location>
        <position position="268"/>
    </location>
    <ligand>
        <name>NADP(+)</name>
        <dbReference type="ChEBI" id="CHEBI:58349"/>
    </ligand>
</feature>
<proteinExistence type="inferred from homology"/>
<reference key="1">
    <citation type="journal article" date="2016" name="J. Antibiot.">
        <title>Genome mining of the sordarin biosynthetic gene cluster from Sordaria araneosa Cain ATCC 36386: characterization of cycloaraneosene synthase and GDP-6-deoxyaltrose transferase.</title>
        <authorList>
            <person name="Kudo F."/>
            <person name="Matsuura Y."/>
            <person name="Hayashi T."/>
            <person name="Fukushima M."/>
            <person name="Eguchi T."/>
        </authorList>
    </citation>
    <scope>NUCLEOTIDE SEQUENCE [GENOMIC DNA]</scope>
    <scope>FUNCTION</scope>
    <scope>PATHWAY</scope>
    <source>
        <strain>ATCC 36386 / NRRL 3196</strain>
    </source>
</reference>
<name>SDNK_SORAA</name>
<evidence type="ECO:0000250" key="1">
    <source>
        <dbReference type="UniProtKB" id="L0E2Z4"/>
    </source>
</evidence>
<evidence type="ECO:0000250" key="2">
    <source>
        <dbReference type="UniProtKB" id="O93868"/>
    </source>
</evidence>
<evidence type="ECO:0000269" key="3">
    <source>
    </source>
</evidence>
<evidence type="ECO:0000303" key="4">
    <source>
    </source>
</evidence>
<evidence type="ECO:0000305" key="5"/>
<evidence type="ECO:0000305" key="6">
    <source>
    </source>
</evidence>
<keyword id="KW-0045">Antibiotic biosynthesis</keyword>
<keyword id="KW-0521">NADP</keyword>
<keyword id="KW-0560">Oxidoreductase</keyword>
<organism>
    <name type="scientific">Sordaria araneosa</name>
    <name type="common">Pleurage araneosa</name>
    <dbReference type="NCBI Taxonomy" id="573841"/>
    <lineage>
        <taxon>Eukaryota</taxon>
        <taxon>Fungi</taxon>
        <taxon>Dikarya</taxon>
        <taxon>Ascomycota</taxon>
        <taxon>Pezizomycotina</taxon>
        <taxon>Sordariomycetes</taxon>
        <taxon>Sordariomycetidae</taxon>
        <taxon>Sordariales</taxon>
        <taxon>Sordariaceae</taxon>
        <taxon>Sordaria</taxon>
    </lineage>
</organism>
<gene>
    <name evidence="4" type="primary">sdnK</name>
</gene>